<accession>P36112</accession>
<accession>D6VX81</accession>
<evidence type="ECO:0000255" key="1"/>
<evidence type="ECO:0000269" key="2">
    <source>
    </source>
</evidence>
<evidence type="ECO:0000269" key="3">
    <source>
    </source>
</evidence>
<evidence type="ECO:0000269" key="4">
    <source>
    </source>
</evidence>
<evidence type="ECO:0000269" key="5">
    <source>
    </source>
</evidence>
<evidence type="ECO:0000269" key="6">
    <source>
    </source>
</evidence>
<evidence type="ECO:0000269" key="7">
    <source>
    </source>
</evidence>
<evidence type="ECO:0000269" key="8">
    <source>
    </source>
</evidence>
<evidence type="ECO:0000305" key="9"/>
<dbReference type="EMBL" id="Z28241">
    <property type="protein sequence ID" value="CAA82088.1"/>
    <property type="molecule type" value="Genomic_DNA"/>
</dbReference>
<dbReference type="EMBL" id="BK006944">
    <property type="protein sequence ID" value="DAA09171.1"/>
    <property type="molecule type" value="Genomic_DNA"/>
</dbReference>
<dbReference type="PIR" id="S38085">
    <property type="entry name" value="S38085"/>
</dbReference>
<dbReference type="RefSeq" id="NP_012941.1">
    <property type="nucleotide sequence ID" value="NM_001179806.1"/>
</dbReference>
<dbReference type="SMR" id="P36112"/>
<dbReference type="BioGRID" id="34148">
    <property type="interactions" value="429"/>
</dbReference>
<dbReference type="ComplexPortal" id="CPX-140">
    <property type="entry name" value="MICOS mitochondrial contact site and cristae organizing system complex"/>
</dbReference>
<dbReference type="DIP" id="DIP-4644N"/>
<dbReference type="FunCoup" id="P36112">
    <property type="interactions" value="272"/>
</dbReference>
<dbReference type="IntAct" id="P36112">
    <property type="interactions" value="45"/>
</dbReference>
<dbReference type="MINT" id="P36112"/>
<dbReference type="STRING" id="4932.YKR016W"/>
<dbReference type="TCDB" id="9.B.216.1.1">
    <property type="family name" value="the micos complex component, mic60 (mic60) family"/>
</dbReference>
<dbReference type="iPTMnet" id="P36112"/>
<dbReference type="PaxDb" id="4932-YKR016W"/>
<dbReference type="PeptideAtlas" id="P36112"/>
<dbReference type="EnsemblFungi" id="YKR016W_mRNA">
    <property type="protein sequence ID" value="YKR016W"/>
    <property type="gene ID" value="YKR016W"/>
</dbReference>
<dbReference type="GeneID" id="853886"/>
<dbReference type="KEGG" id="sce:YKR016W"/>
<dbReference type="AGR" id="SGD:S000001724"/>
<dbReference type="SGD" id="S000001724">
    <property type="gene designation" value="MIC60"/>
</dbReference>
<dbReference type="VEuPathDB" id="FungiDB:YKR016W"/>
<dbReference type="eggNOG" id="KOG1854">
    <property type="taxonomic scope" value="Eukaryota"/>
</dbReference>
<dbReference type="GeneTree" id="ENSGT00390000002313"/>
<dbReference type="HOGENOM" id="CLU_008024_2_0_1"/>
<dbReference type="InParanoid" id="P36112"/>
<dbReference type="OMA" id="RLDHQMQ"/>
<dbReference type="OrthoDB" id="10261039at2759"/>
<dbReference type="BioCyc" id="YEAST:G3O-31992-MONOMER"/>
<dbReference type="BioGRID-ORCS" id="853886">
    <property type="hits" value="5 hits in 10 CRISPR screens"/>
</dbReference>
<dbReference type="PRO" id="PR:P36112"/>
<dbReference type="Proteomes" id="UP000002311">
    <property type="component" value="Chromosome XI"/>
</dbReference>
<dbReference type="RNAct" id="P36112">
    <property type="molecule type" value="protein"/>
</dbReference>
<dbReference type="GO" id="GO:0061617">
    <property type="term" value="C:MICOS complex"/>
    <property type="evidence" value="ECO:0000314"/>
    <property type="project" value="SGD"/>
</dbReference>
<dbReference type="GO" id="GO:0030061">
    <property type="term" value="C:mitochondrial crista"/>
    <property type="evidence" value="ECO:0000314"/>
    <property type="project" value="SGD"/>
</dbReference>
<dbReference type="GO" id="GO:0044284">
    <property type="term" value="C:mitochondrial crista junction"/>
    <property type="evidence" value="ECO:0000314"/>
    <property type="project" value="ComplexPortal"/>
</dbReference>
<dbReference type="GO" id="GO:0005743">
    <property type="term" value="C:mitochondrial inner membrane"/>
    <property type="evidence" value="ECO:0000314"/>
    <property type="project" value="SGD"/>
</dbReference>
<dbReference type="GO" id="GO:0005739">
    <property type="term" value="C:mitochondrion"/>
    <property type="evidence" value="ECO:0000314"/>
    <property type="project" value="ComplexPortal"/>
</dbReference>
<dbReference type="GO" id="GO:0042407">
    <property type="term" value="P:cristae formation"/>
    <property type="evidence" value="ECO:0000315"/>
    <property type="project" value="SGD"/>
</dbReference>
<dbReference type="GO" id="GO:0045041">
    <property type="term" value="P:protein import into mitochondrial intermembrane space"/>
    <property type="evidence" value="ECO:0000315"/>
    <property type="project" value="SGD"/>
</dbReference>
<dbReference type="InterPro" id="IPR019133">
    <property type="entry name" value="MIC60"/>
</dbReference>
<dbReference type="PANTHER" id="PTHR15415:SF7">
    <property type="entry name" value="MICOS COMPLEX SUBUNIT MIC60"/>
    <property type="match status" value="1"/>
</dbReference>
<dbReference type="PANTHER" id="PTHR15415">
    <property type="entry name" value="MITOFILIN"/>
    <property type="match status" value="1"/>
</dbReference>
<dbReference type="Pfam" id="PF09731">
    <property type="entry name" value="Mitofilin"/>
    <property type="match status" value="3"/>
</dbReference>
<sequence>MMLRTTASRKIVLRRGLASINTGTTVASKKASHKFRNTLWTIALSATAFYAGGIIYSQKNDKFGDFFSNNVPFAEDLLETYEHYHDRPTLFLEDSWDGLKAKSNDLLSGLTGSSQTRRSNRENIEVKKILSLEPLNIETENSDPQLKEIIGSLNDLINSLNDSNLSIPESEFNSIKKSNQNMLTNLSQLNETLKEALSNYMIQRTSEVITELNTQYENSKREFEKNLQKNLLQEVDEFKENLTKQKDKELEEKLKANEELLQAKHANEVGLLSITQVKEFNKIIKDKIEKERNGRLAHLEEINSEVNDLSKSIDRSSKILSKNEALVQLTFQVDEIKSRINNNNLPDVNIDKELSRLKLLSNLLSTFNKKSCCDDGDCCSCKKGNKNEGKEGKISCKCKPKTNPPSLLSVALDELESTCSGKKILSNEQIYNRWNLLADDFKTASLLPPNSGILGQLTAKVFSLFLFTKTGNPSNATDFDSVYARVGDNLRVSNLNDAVEEVVSLKGWPHKVCESWIEDARRKLEVQRLVEILDCEIRTL</sequence>
<organism>
    <name type="scientific">Saccharomyces cerevisiae (strain ATCC 204508 / S288c)</name>
    <name type="common">Baker's yeast</name>
    <dbReference type="NCBI Taxonomy" id="559292"/>
    <lineage>
        <taxon>Eukaryota</taxon>
        <taxon>Fungi</taxon>
        <taxon>Dikarya</taxon>
        <taxon>Ascomycota</taxon>
        <taxon>Saccharomycotina</taxon>
        <taxon>Saccharomycetes</taxon>
        <taxon>Saccharomycetales</taxon>
        <taxon>Saccharomycetaceae</taxon>
        <taxon>Saccharomyces</taxon>
    </lineage>
</organism>
<name>MIC60_YEAST</name>
<keyword id="KW-0175">Coiled coil</keyword>
<keyword id="KW-0472">Membrane</keyword>
<keyword id="KW-0496">Mitochondrion</keyword>
<keyword id="KW-0999">Mitochondrion inner membrane</keyword>
<keyword id="KW-1185">Reference proteome</keyword>
<keyword id="KW-0809">Transit peptide</keyword>
<keyword id="KW-0812">Transmembrane</keyword>
<keyword id="KW-1133">Transmembrane helix</keyword>
<comment type="function">
    <text evidence="5 6 7">Component of the MICOS complex, a large protein complex of the mitochondrial inner membrane that plays crucial roles in the maintenance of crista junctions, inner membrane architecture, and formation of contact sites to the outer membrane. Plays a role in keeping cristae membranes connected to the inner boundary membrane. Also promotes protein import via the mitochondrial intermembrane space assembly (MIA) pathway.</text>
</comment>
<comment type="subunit">
    <text evidence="6 7 8">Component of the mitochondrial contact site and cristae organizing system (MICOS) complex, composed of at least MIC10, MIC12, MIC19, MIC26, MIC27 and MIC60. This complex was also known under the names MINOS or MitOS complex. Interacts with TOM22 and TOM40 in a MICOS-independent manner, resulting in coupling with the outer membrane. Interacts with MIA40, OM45 and POR1.</text>
</comment>
<comment type="interaction">
    <interactant intactId="EBI-27078">
        <id>P36112</id>
    </interactant>
    <interactant intactId="EBI-22936">
        <id>P43594</id>
        <label>MIC19</label>
    </interactant>
    <organismsDiffer>false</organismsDiffer>
    <experiments>6</experiments>
</comment>
<comment type="subcellular location">
    <subcellularLocation>
        <location evidence="2 5 6 7">Mitochondrion inner membrane</location>
        <topology evidence="2 5 6 7">Single-pass membrane protein</topology>
    </subcellularLocation>
    <text>Enriched at crista junctions.</text>
</comment>
<comment type="disruption phenotype">
    <text evidence="4 6 7">Increases frequency of mitochondrial genome loss and leads to altered mitochondrial morphology. Moderately reduces mitochondrial membrane potential and import efficiency of preproteins that are transported into or across the inner membrane via TIM23 complex. Impairs precursor protein import via the MIA pathway. 60-70% of mitochondria exhibit an increased inner membrane surface and stacks of lamellar cristae disconnected from the inner boundary membrane.</text>
</comment>
<comment type="miscellaneous">
    <text evidence="3">Present with 5730 molecules/cell in log phase SD medium.</text>
</comment>
<comment type="similarity">
    <text evidence="9">Belongs to the MICOS complex subunit Mic60 family.</text>
</comment>
<protein>
    <recommendedName>
        <fullName>MICOS complex subunit MIC60</fullName>
    </recommendedName>
    <alternativeName>
        <fullName>Altered inheritance of mitochondria protein 28</fullName>
    </alternativeName>
    <alternativeName>
        <fullName>Formation of crista junctions protein 1</fullName>
    </alternativeName>
    <alternativeName>
        <fullName>Found in mitochondrial proteome protein 13</fullName>
    </alternativeName>
    <alternativeName>
        <fullName>Mitofilin</fullName>
    </alternativeName>
</protein>
<feature type="transit peptide" description="Mitochondrion" evidence="1">
    <location>
        <begin position="1"/>
        <end position="17"/>
    </location>
</feature>
<feature type="chain" id="PRO_0000203197" description="MICOS complex subunit MIC60">
    <location>
        <begin position="18"/>
        <end position="540"/>
    </location>
</feature>
<feature type="topological domain" description="Mitochondrial matrix" evidence="1">
    <location>
        <begin position="18"/>
        <end position="37"/>
    </location>
</feature>
<feature type="transmembrane region" description="Helical" evidence="1">
    <location>
        <begin position="38"/>
        <end position="57"/>
    </location>
</feature>
<feature type="topological domain" description="Mitochondrial intermembrane" evidence="1">
    <location>
        <begin position="58"/>
        <end position="540"/>
    </location>
</feature>
<feature type="coiled-coil region" evidence="1">
    <location>
        <begin position="173"/>
        <end position="268"/>
    </location>
</feature>
<proteinExistence type="evidence at protein level"/>
<gene>
    <name type="primary">MIC60</name>
    <name type="synonym">AIM28</name>
    <name type="synonym">FCJ1</name>
    <name type="synonym">FMP13</name>
    <name type="ordered locus">YKR016W</name>
</gene>
<reference key="1">
    <citation type="journal article" date="1994" name="Nature">
        <title>Complete DNA sequence of yeast chromosome XI.</title>
        <authorList>
            <person name="Dujon B."/>
            <person name="Alexandraki D."/>
            <person name="Andre B."/>
            <person name="Ansorge W."/>
            <person name="Baladron V."/>
            <person name="Ballesta J.P.G."/>
            <person name="Banrevi A."/>
            <person name="Bolle P.-A."/>
            <person name="Bolotin-Fukuhara M."/>
            <person name="Bossier P."/>
            <person name="Bou G."/>
            <person name="Boyer J."/>
            <person name="Buitrago M.J."/>
            <person name="Cheret G."/>
            <person name="Colleaux L."/>
            <person name="Daignan-Fornier B."/>
            <person name="del Rey F."/>
            <person name="Dion C."/>
            <person name="Domdey H."/>
            <person name="Duesterhoeft A."/>
            <person name="Duesterhus S."/>
            <person name="Entian K.-D."/>
            <person name="Erfle H."/>
            <person name="Esteban P.F."/>
            <person name="Feldmann H."/>
            <person name="Fernandes L."/>
            <person name="Fobo G.M."/>
            <person name="Fritz C."/>
            <person name="Fukuhara H."/>
            <person name="Gabel C."/>
            <person name="Gaillon L."/>
            <person name="Garcia-Cantalejo J.M."/>
            <person name="Garcia-Ramirez J.J."/>
            <person name="Gent M.E."/>
            <person name="Ghazvini M."/>
            <person name="Goffeau A."/>
            <person name="Gonzalez A."/>
            <person name="Grothues D."/>
            <person name="Guerreiro P."/>
            <person name="Hegemann J.H."/>
            <person name="Hewitt N."/>
            <person name="Hilger F."/>
            <person name="Hollenberg C.P."/>
            <person name="Horaitis O."/>
            <person name="Indge K.J."/>
            <person name="Jacquier A."/>
            <person name="James C.M."/>
            <person name="Jauniaux J.-C."/>
            <person name="Jimenez A."/>
            <person name="Keuchel H."/>
            <person name="Kirchrath L."/>
            <person name="Kleine K."/>
            <person name="Koetter P."/>
            <person name="Legrain P."/>
            <person name="Liebl S."/>
            <person name="Louis E.J."/>
            <person name="Maia e Silva A."/>
            <person name="Marck C."/>
            <person name="Monnier A.-L."/>
            <person name="Moestl D."/>
            <person name="Mueller S."/>
            <person name="Obermaier B."/>
            <person name="Oliver S.G."/>
            <person name="Pallier C."/>
            <person name="Pascolo S."/>
            <person name="Pfeiffer F."/>
            <person name="Philippsen P."/>
            <person name="Planta R.J."/>
            <person name="Pohl F.M."/>
            <person name="Pohl T.M."/>
            <person name="Poehlmann R."/>
            <person name="Portetelle D."/>
            <person name="Purnelle B."/>
            <person name="Puzos V."/>
            <person name="Ramezani Rad M."/>
            <person name="Rasmussen S.W."/>
            <person name="Remacha M.A."/>
            <person name="Revuelta J.L."/>
            <person name="Richard G.-F."/>
            <person name="Rieger M."/>
            <person name="Rodrigues-Pousada C."/>
            <person name="Rose M."/>
            <person name="Rupp T."/>
            <person name="Santos M.A."/>
            <person name="Schwager C."/>
            <person name="Sensen C."/>
            <person name="Skala J."/>
            <person name="Soares H."/>
            <person name="Sor F."/>
            <person name="Stegemann J."/>
            <person name="Tettelin H."/>
            <person name="Thierry A."/>
            <person name="Tzermia M."/>
            <person name="Urrestarazu L.A."/>
            <person name="van Dyck L."/>
            <person name="van Vliet-Reedijk J.C."/>
            <person name="Valens M."/>
            <person name="Vandenbol M."/>
            <person name="Vilela C."/>
            <person name="Vissers S."/>
            <person name="von Wettstein D."/>
            <person name="Voss H."/>
            <person name="Wiemann S."/>
            <person name="Xu G."/>
            <person name="Zimmermann J."/>
            <person name="Haasemann M."/>
            <person name="Becker I."/>
            <person name="Mewes H.-W."/>
        </authorList>
    </citation>
    <scope>NUCLEOTIDE SEQUENCE [LARGE SCALE GENOMIC DNA]</scope>
    <source>
        <strain>ATCC 204508 / S288c</strain>
    </source>
</reference>
<reference key="2">
    <citation type="journal article" date="2014" name="G3 (Bethesda)">
        <title>The reference genome sequence of Saccharomyces cerevisiae: Then and now.</title>
        <authorList>
            <person name="Engel S.R."/>
            <person name="Dietrich F.S."/>
            <person name="Fisk D.G."/>
            <person name="Binkley G."/>
            <person name="Balakrishnan R."/>
            <person name="Costanzo M.C."/>
            <person name="Dwight S.S."/>
            <person name="Hitz B.C."/>
            <person name="Karra K."/>
            <person name="Nash R.S."/>
            <person name="Weng S."/>
            <person name="Wong E.D."/>
            <person name="Lloyd P."/>
            <person name="Skrzypek M.S."/>
            <person name="Miyasato S.R."/>
            <person name="Simison M."/>
            <person name="Cherry J.M."/>
        </authorList>
    </citation>
    <scope>GENOME REANNOTATION</scope>
    <source>
        <strain>ATCC 204508 / S288c</strain>
    </source>
</reference>
<reference key="3">
    <citation type="journal article" date="2003" name="Nature">
        <title>Global analysis of protein localization in budding yeast.</title>
        <authorList>
            <person name="Huh W.-K."/>
            <person name="Falvo J.V."/>
            <person name="Gerke L.C."/>
            <person name="Carroll A.S."/>
            <person name="Howson R.W."/>
            <person name="Weissman J.S."/>
            <person name="O'Shea E.K."/>
        </authorList>
    </citation>
    <scope>SUBCELLULAR LOCATION [LARGE SCALE ANALYSIS]</scope>
</reference>
<reference key="4">
    <citation type="journal article" date="2003" name="Nature">
        <title>Global analysis of protein expression in yeast.</title>
        <authorList>
            <person name="Ghaemmaghami S."/>
            <person name="Huh W.-K."/>
            <person name="Bower K."/>
            <person name="Howson R.W."/>
            <person name="Belle A."/>
            <person name="Dephoure N."/>
            <person name="O'Shea E.K."/>
            <person name="Weissman J.S."/>
        </authorList>
    </citation>
    <scope>LEVEL OF PROTEIN EXPRESSION [LARGE SCALE ANALYSIS]</scope>
</reference>
<reference key="5">
    <citation type="journal article" date="2009" name="J. Cell Biol.">
        <title>Formation of cristae and crista junctions in mitochondria depends on antagonism between Fcj1 and Su e/g.</title>
        <authorList>
            <person name="Rabl R."/>
            <person name="Soubannier V."/>
            <person name="Scholz R."/>
            <person name="Vogel F."/>
            <person name="Mendl N."/>
            <person name="Vasiljev-Neumeyer A."/>
            <person name="Korner C."/>
            <person name="Jagasia R."/>
            <person name="Keil T."/>
            <person name="Baumeister W."/>
            <person name="Cyrklaff M."/>
            <person name="Neupert W."/>
            <person name="Reichert A.S."/>
        </authorList>
    </citation>
    <scope>FUNCTION</scope>
    <scope>SUBCELLULAR LOCATION</scope>
    <scope>TOPOLOGY</scope>
</reference>
<reference key="6">
    <citation type="journal article" date="2009" name="PLoS Genet.">
        <title>Computationally driven, quantitative experiments discover genes required for mitochondrial biogenesis.</title>
        <authorList>
            <person name="Hess D.C."/>
            <person name="Myers C.L."/>
            <person name="Huttenhower C."/>
            <person name="Hibbs M.A."/>
            <person name="Hayes A.P."/>
            <person name="Paw J."/>
            <person name="Clore J.J."/>
            <person name="Mendoza R.M."/>
            <person name="Luis B.S."/>
            <person name="Nislow C."/>
            <person name="Giaever G."/>
            <person name="Costanzo M."/>
            <person name="Troyanskaya O.G."/>
            <person name="Caudy A.A."/>
        </authorList>
    </citation>
    <scope>DISRUPTION PHENOTYPE</scope>
</reference>
<reference key="7">
    <citation type="journal article" date="2011" name="Dev. Cell">
        <title>Dual role of mitofilin in mitochondrial membrane organization and protein biogenesis.</title>
        <authorList>
            <person name="von der Malsburg K."/>
            <person name="Muller J.M."/>
            <person name="Bohnert M."/>
            <person name="Oeljeklaus S."/>
            <person name="Kwiatkowska P."/>
            <person name="Becker T."/>
            <person name="Loniewska-Lwowska A."/>
            <person name="Wiese S."/>
            <person name="Rao S."/>
            <person name="Milenkovic D."/>
            <person name="Hutu D.P."/>
            <person name="Zerbes R.M."/>
            <person name="Schulze-Specking A."/>
            <person name="Meyer H.E."/>
            <person name="Martinou J.C."/>
            <person name="Rospert S."/>
            <person name="Rehling P."/>
            <person name="Meisinger C."/>
            <person name="Veenhuis M."/>
            <person name="Warscheid B."/>
            <person name="van der Klei I.J."/>
            <person name="Pfanner N."/>
            <person name="Chacinska A."/>
            <person name="van der Laan M."/>
        </authorList>
    </citation>
    <scope>FUNCTION</scope>
    <scope>INTERACTION WITH MIA40; TOM22 AND TOM40</scope>
    <scope>COMPOSITION OF THE MICOS COMPLEX</scope>
    <scope>SUBCELLULAR LOCATION</scope>
    <scope>DISRUPTION PHENOTYPE</scope>
</reference>
<reference key="8">
    <citation type="journal article" date="2011" name="EMBO J.">
        <title>The mitochondrial contact site complex, a determinant of mitochondrial architecture.</title>
        <authorList>
            <person name="Harner M."/>
            <person name="Korner C."/>
            <person name="Walther D."/>
            <person name="Mokranjac D."/>
            <person name="Kaesmacher J."/>
            <person name="Welsch U."/>
            <person name="Griffith J."/>
            <person name="Mann M."/>
            <person name="Reggiori F."/>
            <person name="Neupert W."/>
        </authorList>
    </citation>
    <scope>IDENTIFICATION IN THE MICOS COMPLEX</scope>
    <scope>MASS SPECTROMETRY</scope>
</reference>
<reference key="9">
    <citation type="journal article" date="2011" name="J. Cell Biol.">
        <title>A mitochondrial-focused genetic interaction map reveals a scaffold-like complex required for inner membrane organization in mitochondria.</title>
        <authorList>
            <person name="Hoppins S."/>
            <person name="Collins S.R."/>
            <person name="Cassidy-Stone A."/>
            <person name="Hummel E."/>
            <person name="Devay R.M."/>
            <person name="Lackner L.L."/>
            <person name="Westermann B."/>
            <person name="Schuldiner M."/>
            <person name="Weissman J.S."/>
            <person name="Nunnari J."/>
        </authorList>
    </citation>
    <scope>FUNCTION</scope>
    <scope>COMPOSITION OF THE MICOS COMPLEX</scope>
    <scope>INTERACTION WITH OM45 AND POR1</scope>
    <scope>SUBCELLULAR LOCATION</scope>
    <scope>DISRUPTION PHENOTYPE</scope>
</reference>
<reference key="10">
    <citation type="journal article" date="2014" name="J. Cell Biol.">
        <title>Uniform nomenclature for the mitochondrial contact site and cristae organizing system.</title>
        <authorList>
            <person name="Pfanner N."/>
            <person name="van der Laan M."/>
            <person name="Amati P."/>
            <person name="Capaldi R.A."/>
            <person name="Caudy A.A."/>
            <person name="Chacinska A."/>
            <person name="Darshi M."/>
            <person name="Deckers M."/>
            <person name="Hoppins S."/>
            <person name="Icho T."/>
            <person name="Jakobs S."/>
            <person name="Ji J."/>
            <person name="Kozjak-Pavlovic V."/>
            <person name="Meisinger C."/>
            <person name="Odgren P.R."/>
            <person name="Park S.K."/>
            <person name="Rehling P."/>
            <person name="Reichert A.S."/>
            <person name="Sheikh M.S."/>
            <person name="Taylor S.S."/>
            <person name="Tsuchida N."/>
            <person name="van der Bliek A.M."/>
            <person name="van der Klei I.J."/>
            <person name="Weissman J.S."/>
            <person name="Westermann B."/>
            <person name="Zha J."/>
            <person name="Neupert W."/>
            <person name="Nunnari J."/>
        </authorList>
    </citation>
    <scope>NOMENCLATURE</scope>
</reference>